<keyword id="KW-0963">Cytoplasm</keyword>
<keyword id="KW-0251">Elongation factor</keyword>
<keyword id="KW-0342">GTP-binding</keyword>
<keyword id="KW-0547">Nucleotide-binding</keyword>
<keyword id="KW-0648">Protein biosynthesis</keyword>
<sequence length="694" mass="76494">MSDQEFGLDAIRNIGIMAHIDAGKTTTTERILFYAGRTHKIGEVHEGGATMDWMEQEQERGITITSAATTVFWLGAKINIIDTPGHVDFTIEVERSLRVLDGAVAVFDAVSGVEPQSETVWRQANKYGVPRIAFVNKMDRMGANYFGAVESMREKLGANAIPVHCPIGSESQFVGMVDLISQKALYFLEETLGAKWEEREIPEDLQEQCATLRMQLLEELATVDESNEAFMEKVLENPDSITEEEIHTVMRKGVIEGKINPVLCGSAFKNKGVQQLLDVIVKWLPSPLDRGNVRGINLKTGEEVSLKPSKDGPLAALAFKIMTDPYVGRITFIRIYSGTLKKGSAILNSTKDKKERISRLLEMHANERTDRDEFTVGDIGACVGLKFSVTGDTLCDENQEIVLERIEAPEPVIDMAIEPKSKGDREKLAQALSALSEEDPTFRVSTNEETGQTIISGMGELHLDILRDRMIREFRVEANVGKPQVSYKETITKTSNSETKYVKQSGGRGQYAHVCLEIEPNEPGKGNEVVSKIVGGVIPKEYIPAVIKGVEEGLNSGVLAGYGLVDVKVSIVFGSYHEVDSSEMAFKICGSMAVKEACRKALPVILEPIMKVTVITPEDHLGDVIGDLNRRRGKILGQESSRNMAQVSAEVPLSEMFGYMTSLRSLTSGRATSTMEPAFFAKVPQKIQEEIVKK</sequence>
<proteinExistence type="inferred from homology"/>
<reference key="1">
    <citation type="journal article" date="2008" name="Genome Res.">
        <title>Chlamydia trachomatis: genome sequence analysis of lymphogranuloma venereum isolates.</title>
        <authorList>
            <person name="Thomson N.R."/>
            <person name="Holden M.T.G."/>
            <person name="Carder C."/>
            <person name="Lennard N."/>
            <person name="Lockey S.J."/>
            <person name="Marsh P."/>
            <person name="Skipp P."/>
            <person name="O'Connor C.D."/>
            <person name="Goodhead I."/>
            <person name="Norbertzcak H."/>
            <person name="Harris B."/>
            <person name="Ormond D."/>
            <person name="Rance R."/>
            <person name="Quail M.A."/>
            <person name="Parkhill J."/>
            <person name="Stephens R.S."/>
            <person name="Clarke I.N."/>
        </authorList>
    </citation>
    <scope>NUCLEOTIDE SEQUENCE [LARGE SCALE GENOMIC DNA]</scope>
    <source>
        <strain>UCH-1/proctitis</strain>
    </source>
</reference>
<accession>B0BC74</accession>
<protein>
    <recommendedName>
        <fullName evidence="1">Elongation factor G</fullName>
        <shortName evidence="1">EF-G</shortName>
    </recommendedName>
</protein>
<organism>
    <name type="scientific">Chlamydia trachomatis serovar L2b (strain UCH-1/proctitis)</name>
    <dbReference type="NCBI Taxonomy" id="471473"/>
    <lineage>
        <taxon>Bacteria</taxon>
        <taxon>Pseudomonadati</taxon>
        <taxon>Chlamydiota</taxon>
        <taxon>Chlamydiia</taxon>
        <taxon>Chlamydiales</taxon>
        <taxon>Chlamydiaceae</taxon>
        <taxon>Chlamydia/Chlamydophila group</taxon>
        <taxon>Chlamydia</taxon>
    </lineage>
</organism>
<feature type="chain" id="PRO_1000091700" description="Elongation factor G">
    <location>
        <begin position="1"/>
        <end position="694"/>
    </location>
</feature>
<feature type="domain" description="tr-type G">
    <location>
        <begin position="9"/>
        <end position="288"/>
    </location>
</feature>
<feature type="binding site" evidence="1">
    <location>
        <begin position="18"/>
        <end position="25"/>
    </location>
    <ligand>
        <name>GTP</name>
        <dbReference type="ChEBI" id="CHEBI:37565"/>
    </ligand>
</feature>
<feature type="binding site" evidence="1">
    <location>
        <begin position="82"/>
        <end position="86"/>
    </location>
    <ligand>
        <name>GTP</name>
        <dbReference type="ChEBI" id="CHEBI:37565"/>
    </ligand>
</feature>
<feature type="binding site" evidence="1">
    <location>
        <begin position="136"/>
        <end position="139"/>
    </location>
    <ligand>
        <name>GTP</name>
        <dbReference type="ChEBI" id="CHEBI:37565"/>
    </ligand>
</feature>
<evidence type="ECO:0000255" key="1">
    <source>
        <dbReference type="HAMAP-Rule" id="MF_00054"/>
    </source>
</evidence>
<gene>
    <name evidence="1" type="primary">fusA</name>
    <name type="ordered locus">CTLon_0692</name>
</gene>
<dbReference type="EMBL" id="AM884177">
    <property type="protein sequence ID" value="CAP07089.1"/>
    <property type="molecule type" value="Genomic_DNA"/>
</dbReference>
<dbReference type="RefSeq" id="WP_012263656.1">
    <property type="nucleotide sequence ID" value="NC_010280.2"/>
</dbReference>
<dbReference type="SMR" id="B0BC74"/>
<dbReference type="KEGG" id="ctl:CTLon_0692"/>
<dbReference type="HOGENOM" id="CLU_002794_4_1_0"/>
<dbReference type="Proteomes" id="UP001154401">
    <property type="component" value="Chromosome"/>
</dbReference>
<dbReference type="GO" id="GO:0005737">
    <property type="term" value="C:cytoplasm"/>
    <property type="evidence" value="ECO:0007669"/>
    <property type="project" value="UniProtKB-SubCell"/>
</dbReference>
<dbReference type="GO" id="GO:0005525">
    <property type="term" value="F:GTP binding"/>
    <property type="evidence" value="ECO:0007669"/>
    <property type="project" value="UniProtKB-UniRule"/>
</dbReference>
<dbReference type="GO" id="GO:0003924">
    <property type="term" value="F:GTPase activity"/>
    <property type="evidence" value="ECO:0007669"/>
    <property type="project" value="InterPro"/>
</dbReference>
<dbReference type="GO" id="GO:0003746">
    <property type="term" value="F:translation elongation factor activity"/>
    <property type="evidence" value="ECO:0007669"/>
    <property type="project" value="UniProtKB-UniRule"/>
</dbReference>
<dbReference type="GO" id="GO:0032790">
    <property type="term" value="P:ribosome disassembly"/>
    <property type="evidence" value="ECO:0007669"/>
    <property type="project" value="TreeGrafter"/>
</dbReference>
<dbReference type="CDD" id="cd01886">
    <property type="entry name" value="EF-G"/>
    <property type="match status" value="1"/>
</dbReference>
<dbReference type="CDD" id="cd16262">
    <property type="entry name" value="EFG_III"/>
    <property type="match status" value="1"/>
</dbReference>
<dbReference type="CDD" id="cd01434">
    <property type="entry name" value="EFG_mtEFG1_IV"/>
    <property type="match status" value="1"/>
</dbReference>
<dbReference type="CDD" id="cd03713">
    <property type="entry name" value="EFG_mtEFG_C"/>
    <property type="match status" value="1"/>
</dbReference>
<dbReference type="CDD" id="cd04088">
    <property type="entry name" value="EFG_mtEFG_II"/>
    <property type="match status" value="1"/>
</dbReference>
<dbReference type="FunFam" id="2.40.30.10:FF:000006">
    <property type="entry name" value="Elongation factor G"/>
    <property type="match status" value="1"/>
</dbReference>
<dbReference type="FunFam" id="3.30.230.10:FF:000003">
    <property type="entry name" value="Elongation factor G"/>
    <property type="match status" value="1"/>
</dbReference>
<dbReference type="FunFam" id="3.30.70.240:FF:000001">
    <property type="entry name" value="Elongation factor G"/>
    <property type="match status" value="1"/>
</dbReference>
<dbReference type="FunFam" id="3.30.70.870:FF:000001">
    <property type="entry name" value="Elongation factor G"/>
    <property type="match status" value="1"/>
</dbReference>
<dbReference type="FunFam" id="3.40.50.300:FF:000029">
    <property type="entry name" value="Elongation factor G"/>
    <property type="match status" value="1"/>
</dbReference>
<dbReference type="Gene3D" id="3.30.230.10">
    <property type="match status" value="1"/>
</dbReference>
<dbReference type="Gene3D" id="3.30.70.240">
    <property type="match status" value="1"/>
</dbReference>
<dbReference type="Gene3D" id="3.30.70.870">
    <property type="entry name" value="Elongation Factor G (Translational Gtpase), domain 3"/>
    <property type="match status" value="1"/>
</dbReference>
<dbReference type="Gene3D" id="3.40.50.300">
    <property type="entry name" value="P-loop containing nucleotide triphosphate hydrolases"/>
    <property type="match status" value="1"/>
</dbReference>
<dbReference type="Gene3D" id="2.40.30.10">
    <property type="entry name" value="Translation factors"/>
    <property type="match status" value="1"/>
</dbReference>
<dbReference type="HAMAP" id="MF_00054_B">
    <property type="entry name" value="EF_G_EF_2_B"/>
    <property type="match status" value="1"/>
</dbReference>
<dbReference type="InterPro" id="IPR041095">
    <property type="entry name" value="EFG_II"/>
</dbReference>
<dbReference type="InterPro" id="IPR009022">
    <property type="entry name" value="EFG_III"/>
</dbReference>
<dbReference type="InterPro" id="IPR035647">
    <property type="entry name" value="EFG_III/V"/>
</dbReference>
<dbReference type="InterPro" id="IPR047872">
    <property type="entry name" value="EFG_IV"/>
</dbReference>
<dbReference type="InterPro" id="IPR035649">
    <property type="entry name" value="EFG_V"/>
</dbReference>
<dbReference type="InterPro" id="IPR000640">
    <property type="entry name" value="EFG_V-like"/>
</dbReference>
<dbReference type="InterPro" id="IPR004161">
    <property type="entry name" value="EFTu-like_2"/>
</dbReference>
<dbReference type="InterPro" id="IPR031157">
    <property type="entry name" value="G_TR_CS"/>
</dbReference>
<dbReference type="InterPro" id="IPR027417">
    <property type="entry name" value="P-loop_NTPase"/>
</dbReference>
<dbReference type="InterPro" id="IPR020568">
    <property type="entry name" value="Ribosomal_Su5_D2-typ_SF"/>
</dbReference>
<dbReference type="InterPro" id="IPR014721">
    <property type="entry name" value="Ribsml_uS5_D2-typ_fold_subgr"/>
</dbReference>
<dbReference type="InterPro" id="IPR005225">
    <property type="entry name" value="Small_GTP-bd"/>
</dbReference>
<dbReference type="InterPro" id="IPR000795">
    <property type="entry name" value="T_Tr_GTP-bd_dom"/>
</dbReference>
<dbReference type="InterPro" id="IPR009000">
    <property type="entry name" value="Transl_B-barrel_sf"/>
</dbReference>
<dbReference type="InterPro" id="IPR004540">
    <property type="entry name" value="Transl_elong_EFG/EF2"/>
</dbReference>
<dbReference type="InterPro" id="IPR005517">
    <property type="entry name" value="Transl_elong_EFG/EF2_IV"/>
</dbReference>
<dbReference type="NCBIfam" id="TIGR00484">
    <property type="entry name" value="EF-G"/>
    <property type="match status" value="1"/>
</dbReference>
<dbReference type="NCBIfam" id="NF009381">
    <property type="entry name" value="PRK12740.1-5"/>
    <property type="match status" value="1"/>
</dbReference>
<dbReference type="NCBIfam" id="TIGR00231">
    <property type="entry name" value="small_GTP"/>
    <property type="match status" value="1"/>
</dbReference>
<dbReference type="PANTHER" id="PTHR43261:SF1">
    <property type="entry name" value="RIBOSOME-RELEASING FACTOR 2, MITOCHONDRIAL"/>
    <property type="match status" value="1"/>
</dbReference>
<dbReference type="PANTHER" id="PTHR43261">
    <property type="entry name" value="TRANSLATION ELONGATION FACTOR G-RELATED"/>
    <property type="match status" value="1"/>
</dbReference>
<dbReference type="Pfam" id="PF00679">
    <property type="entry name" value="EFG_C"/>
    <property type="match status" value="1"/>
</dbReference>
<dbReference type="Pfam" id="PF14492">
    <property type="entry name" value="EFG_III"/>
    <property type="match status" value="1"/>
</dbReference>
<dbReference type="Pfam" id="PF03764">
    <property type="entry name" value="EFG_IV"/>
    <property type="match status" value="1"/>
</dbReference>
<dbReference type="Pfam" id="PF00009">
    <property type="entry name" value="GTP_EFTU"/>
    <property type="match status" value="1"/>
</dbReference>
<dbReference type="Pfam" id="PF03144">
    <property type="entry name" value="GTP_EFTU_D2"/>
    <property type="match status" value="1"/>
</dbReference>
<dbReference type="PRINTS" id="PR00315">
    <property type="entry name" value="ELONGATNFCT"/>
</dbReference>
<dbReference type="SMART" id="SM00838">
    <property type="entry name" value="EFG_C"/>
    <property type="match status" value="1"/>
</dbReference>
<dbReference type="SMART" id="SM00889">
    <property type="entry name" value="EFG_IV"/>
    <property type="match status" value="1"/>
</dbReference>
<dbReference type="SUPFAM" id="SSF54980">
    <property type="entry name" value="EF-G C-terminal domain-like"/>
    <property type="match status" value="2"/>
</dbReference>
<dbReference type="SUPFAM" id="SSF52540">
    <property type="entry name" value="P-loop containing nucleoside triphosphate hydrolases"/>
    <property type="match status" value="1"/>
</dbReference>
<dbReference type="SUPFAM" id="SSF54211">
    <property type="entry name" value="Ribosomal protein S5 domain 2-like"/>
    <property type="match status" value="1"/>
</dbReference>
<dbReference type="SUPFAM" id="SSF50447">
    <property type="entry name" value="Translation proteins"/>
    <property type="match status" value="1"/>
</dbReference>
<dbReference type="PROSITE" id="PS00301">
    <property type="entry name" value="G_TR_1"/>
    <property type="match status" value="1"/>
</dbReference>
<dbReference type="PROSITE" id="PS51722">
    <property type="entry name" value="G_TR_2"/>
    <property type="match status" value="1"/>
</dbReference>
<name>EFG_CHLTB</name>
<comment type="function">
    <text evidence="1">Catalyzes the GTP-dependent ribosomal translocation step during translation elongation. During this step, the ribosome changes from the pre-translocational (PRE) to the post-translocational (POST) state as the newly formed A-site-bound peptidyl-tRNA and P-site-bound deacylated tRNA move to the P and E sites, respectively. Catalyzes the coordinated movement of the two tRNA molecules, the mRNA and conformational changes in the ribosome.</text>
</comment>
<comment type="subcellular location">
    <subcellularLocation>
        <location evidence="1">Cytoplasm</location>
    </subcellularLocation>
</comment>
<comment type="similarity">
    <text evidence="1">Belongs to the TRAFAC class translation factor GTPase superfamily. Classic translation factor GTPase family. EF-G/EF-2 subfamily.</text>
</comment>